<gene>
    <name type="primary">CSD3</name>
    <name type="ordered locus">At5g18100</name>
    <name type="ORF">MRG7.6</name>
</gene>
<dbReference type="EC" id="1.15.1.1"/>
<dbReference type="EMBL" id="AF061520">
    <property type="protein sequence ID" value="AAC24833.1"/>
    <property type="molecule type" value="mRNA"/>
</dbReference>
<dbReference type="EMBL" id="AB012246">
    <property type="protein sequence ID" value="BAB09468.1"/>
    <property type="molecule type" value="Genomic_DNA"/>
</dbReference>
<dbReference type="EMBL" id="CP002688">
    <property type="protein sequence ID" value="AED92506.1"/>
    <property type="molecule type" value="Genomic_DNA"/>
</dbReference>
<dbReference type="EMBL" id="CP002688">
    <property type="protein sequence ID" value="AED92507.1"/>
    <property type="molecule type" value="Genomic_DNA"/>
</dbReference>
<dbReference type="EMBL" id="AK117742">
    <property type="protein sequence ID" value="BAC42391.1"/>
    <property type="molecule type" value="mRNA"/>
</dbReference>
<dbReference type="EMBL" id="BT003689">
    <property type="protein sequence ID" value="AAO39917.1"/>
    <property type="molecule type" value="mRNA"/>
</dbReference>
<dbReference type="PIR" id="T51731">
    <property type="entry name" value="T51731"/>
</dbReference>
<dbReference type="RefSeq" id="NP_001119245.1">
    <molecule id="Q9FK60-2"/>
    <property type="nucleotide sequence ID" value="NM_001125773.1"/>
</dbReference>
<dbReference type="RefSeq" id="NP_197311.1">
    <molecule id="Q9FK60-1"/>
    <property type="nucleotide sequence ID" value="NM_121815.3"/>
</dbReference>
<dbReference type="SMR" id="Q9FK60"/>
<dbReference type="BioGRID" id="17204">
    <property type="interactions" value="2"/>
</dbReference>
<dbReference type="FunCoup" id="Q9FK60">
    <property type="interactions" value="2180"/>
</dbReference>
<dbReference type="IntAct" id="Q9FK60">
    <property type="interactions" value="1"/>
</dbReference>
<dbReference type="STRING" id="3702.Q9FK60"/>
<dbReference type="iPTMnet" id="Q9FK60"/>
<dbReference type="PaxDb" id="3702-AT5G18100.1"/>
<dbReference type="ProteomicsDB" id="232513">
    <molecule id="Q9FK60-1"/>
</dbReference>
<dbReference type="EnsemblPlants" id="AT5G18100.1">
    <molecule id="Q9FK60-1"/>
    <property type="protein sequence ID" value="AT5G18100.1"/>
    <property type="gene ID" value="AT5G18100"/>
</dbReference>
<dbReference type="EnsemblPlants" id="AT5G18100.2">
    <molecule id="Q9FK60-2"/>
    <property type="protein sequence ID" value="AT5G18100.2"/>
    <property type="gene ID" value="AT5G18100"/>
</dbReference>
<dbReference type="GeneID" id="831928"/>
<dbReference type="Gramene" id="AT5G18100.1">
    <molecule id="Q9FK60-1"/>
    <property type="protein sequence ID" value="AT5G18100.1"/>
    <property type="gene ID" value="AT5G18100"/>
</dbReference>
<dbReference type="Gramene" id="AT5G18100.2">
    <molecule id="Q9FK60-2"/>
    <property type="protein sequence ID" value="AT5G18100.2"/>
    <property type="gene ID" value="AT5G18100"/>
</dbReference>
<dbReference type="KEGG" id="ath:AT5G18100"/>
<dbReference type="Araport" id="AT5G18100"/>
<dbReference type="TAIR" id="AT5G18100">
    <property type="gene designation" value="CSD3"/>
</dbReference>
<dbReference type="eggNOG" id="KOG0441">
    <property type="taxonomic scope" value="Eukaryota"/>
</dbReference>
<dbReference type="HOGENOM" id="CLU_056632_4_1_1"/>
<dbReference type="InParanoid" id="Q9FK60"/>
<dbReference type="OMA" id="AQRGFHI"/>
<dbReference type="OrthoDB" id="2015551at2759"/>
<dbReference type="PhylomeDB" id="Q9FK60"/>
<dbReference type="PRO" id="PR:Q9FK60"/>
<dbReference type="Proteomes" id="UP000006548">
    <property type="component" value="Chromosome 5"/>
</dbReference>
<dbReference type="ExpressionAtlas" id="Q9FK60">
    <property type="expression patterns" value="baseline and differential"/>
</dbReference>
<dbReference type="GO" id="GO:0005777">
    <property type="term" value="C:peroxisome"/>
    <property type="evidence" value="ECO:0007005"/>
    <property type="project" value="TAIR"/>
</dbReference>
<dbReference type="GO" id="GO:0000325">
    <property type="term" value="C:plant-type vacuole"/>
    <property type="evidence" value="ECO:0007005"/>
    <property type="project" value="TAIR"/>
</dbReference>
<dbReference type="GO" id="GO:0005507">
    <property type="term" value="F:copper ion binding"/>
    <property type="evidence" value="ECO:0007669"/>
    <property type="project" value="InterPro"/>
</dbReference>
<dbReference type="GO" id="GO:0004784">
    <property type="term" value="F:superoxide dismutase activity"/>
    <property type="evidence" value="ECO:0000250"/>
    <property type="project" value="TAIR"/>
</dbReference>
<dbReference type="GO" id="GO:0071486">
    <property type="term" value="P:cellular response to high light intensity"/>
    <property type="evidence" value="ECO:0000270"/>
    <property type="project" value="UniProtKB"/>
</dbReference>
<dbReference type="GO" id="GO:0071484">
    <property type="term" value="P:cellular response to light intensity"/>
    <property type="evidence" value="ECO:0000270"/>
    <property type="project" value="UniProtKB"/>
</dbReference>
<dbReference type="GO" id="GO:0071457">
    <property type="term" value="P:cellular response to ozone"/>
    <property type="evidence" value="ECO:0000270"/>
    <property type="project" value="UniProtKB"/>
</dbReference>
<dbReference type="GO" id="GO:0071472">
    <property type="term" value="P:cellular response to salt stress"/>
    <property type="evidence" value="ECO:0000270"/>
    <property type="project" value="UniProtKB"/>
</dbReference>
<dbReference type="GO" id="GO:0071493">
    <property type="term" value="P:cellular response to UV-B"/>
    <property type="evidence" value="ECO:0000270"/>
    <property type="project" value="UniProtKB"/>
</dbReference>
<dbReference type="GO" id="GO:0006979">
    <property type="term" value="P:response to oxidative stress"/>
    <property type="evidence" value="ECO:0000304"/>
    <property type="project" value="TAIR"/>
</dbReference>
<dbReference type="CDD" id="cd00305">
    <property type="entry name" value="Cu-Zn_Superoxide_Dismutase"/>
    <property type="match status" value="1"/>
</dbReference>
<dbReference type="FunFam" id="2.60.40.200:FF:000001">
    <property type="entry name" value="Superoxide dismutase [Cu-Zn]"/>
    <property type="match status" value="1"/>
</dbReference>
<dbReference type="Gene3D" id="2.60.40.200">
    <property type="entry name" value="Superoxide dismutase, copper/zinc binding domain"/>
    <property type="match status" value="1"/>
</dbReference>
<dbReference type="InterPro" id="IPR036423">
    <property type="entry name" value="SOD-like_Cu/Zn_dom_sf"/>
</dbReference>
<dbReference type="InterPro" id="IPR024134">
    <property type="entry name" value="SOD_Cu/Zn_/chaperone"/>
</dbReference>
<dbReference type="InterPro" id="IPR018152">
    <property type="entry name" value="SOD_Cu/Zn_BS"/>
</dbReference>
<dbReference type="InterPro" id="IPR001424">
    <property type="entry name" value="SOD_Cu_Zn_dom"/>
</dbReference>
<dbReference type="PANTHER" id="PTHR10003">
    <property type="entry name" value="SUPEROXIDE DISMUTASE CU-ZN -RELATED"/>
    <property type="match status" value="1"/>
</dbReference>
<dbReference type="Pfam" id="PF00080">
    <property type="entry name" value="Sod_Cu"/>
    <property type="match status" value="1"/>
</dbReference>
<dbReference type="PRINTS" id="PR00068">
    <property type="entry name" value="CUZNDISMTASE"/>
</dbReference>
<dbReference type="SUPFAM" id="SSF49329">
    <property type="entry name" value="Cu,Zn superoxide dismutase-like"/>
    <property type="match status" value="1"/>
</dbReference>
<dbReference type="PROSITE" id="PS00332">
    <property type="entry name" value="SOD_CU_ZN_2"/>
    <property type="match status" value="1"/>
</dbReference>
<name>SODC3_ARATH</name>
<proteinExistence type="evidence at protein level"/>
<comment type="function">
    <text evidence="1">Destroys radicals which are normally produced within the cells and which are toxic to biological systems.</text>
</comment>
<comment type="catalytic activity">
    <reaction>
        <text>2 superoxide + 2 H(+) = H2O2 + O2</text>
        <dbReference type="Rhea" id="RHEA:20696"/>
        <dbReference type="ChEBI" id="CHEBI:15378"/>
        <dbReference type="ChEBI" id="CHEBI:15379"/>
        <dbReference type="ChEBI" id="CHEBI:16240"/>
        <dbReference type="ChEBI" id="CHEBI:18421"/>
        <dbReference type="EC" id="1.15.1.1"/>
    </reaction>
</comment>
<comment type="cofactor">
    <cofactor evidence="1">
        <name>Cu cation</name>
        <dbReference type="ChEBI" id="CHEBI:23378"/>
    </cofactor>
    <text evidence="1">Binds 1 copper ion per subunit.</text>
</comment>
<comment type="cofactor">
    <cofactor evidence="1">
        <name>Zn(2+)</name>
        <dbReference type="ChEBI" id="CHEBI:29105"/>
    </cofactor>
    <text evidence="1">Binds 1 zinc ion per subunit.</text>
</comment>
<comment type="subunit">
    <text evidence="1">Homodimer.</text>
</comment>
<comment type="subcellular location">
    <subcellularLocation>
        <location evidence="3">Peroxisome</location>
    </subcellularLocation>
</comment>
<comment type="alternative products">
    <event type="alternative splicing"/>
    <isoform>
        <id>Q9FK60-1</id>
        <name>1</name>
        <sequence type="displayed"/>
    </isoform>
    <isoform>
        <id>Q9FK60-2</id>
        <name>2</name>
        <sequence type="described" ref="VSP_044111 VSP_044112"/>
    </isoform>
</comment>
<comment type="tissue specificity">
    <text evidence="3">Expressed in leaves (at protein level).</text>
</comment>
<comment type="induction">
    <text evidence="2 3">Upon photosynthetically active radiation (PAR) (e.g. light fluence) increase or after high-light pulse, and UV-B treatment. Accumulates in response to ozone fumigation, during recovery. Repressed by salt stress.</text>
</comment>
<comment type="similarity">
    <text evidence="4">Belongs to the Cu-Zn superoxide dismutase family.</text>
</comment>
<sequence length="164" mass="16941">MEAPRGNLRAVALIAGDNNVRGCLQFVQDISGTTHVTGKISGLSPGFHGFHIHSFGDTTNGCISTGPHFNPLNRVHGPPNEEERHAGDLGNILAGSNGVAEILIKDKHIPLSGQYSILGRAVVVHADPDDLGKGGHKLSKSTGNAGSRVGCGIIGLQSSADAKL</sequence>
<evidence type="ECO:0000250" key="1"/>
<evidence type="ECO:0000269" key="2">
    <source>
    </source>
</evidence>
<evidence type="ECO:0000269" key="3">
    <source>
    </source>
</evidence>
<evidence type="ECO:0000305" key="4"/>
<protein>
    <recommendedName>
        <fullName>Superoxide dismutase [Cu-Zn] 3</fullName>
        <ecNumber>1.15.1.1</ecNumber>
    </recommendedName>
    <alternativeName>
        <fullName>Copper/zinc superoxide dismutase 3</fullName>
    </alternativeName>
</protein>
<keyword id="KW-0025">Alternative splicing</keyword>
<keyword id="KW-0049">Antioxidant</keyword>
<keyword id="KW-0186">Copper</keyword>
<keyword id="KW-1015">Disulfide bond</keyword>
<keyword id="KW-0479">Metal-binding</keyword>
<keyword id="KW-0560">Oxidoreductase</keyword>
<keyword id="KW-0576">Peroxisome</keyword>
<keyword id="KW-1185">Reference proteome</keyword>
<keyword id="KW-0862">Zinc</keyword>
<organism>
    <name type="scientific">Arabidopsis thaliana</name>
    <name type="common">Mouse-ear cress</name>
    <dbReference type="NCBI Taxonomy" id="3702"/>
    <lineage>
        <taxon>Eukaryota</taxon>
        <taxon>Viridiplantae</taxon>
        <taxon>Streptophyta</taxon>
        <taxon>Embryophyta</taxon>
        <taxon>Tracheophyta</taxon>
        <taxon>Spermatophyta</taxon>
        <taxon>Magnoliopsida</taxon>
        <taxon>eudicotyledons</taxon>
        <taxon>Gunneridae</taxon>
        <taxon>Pentapetalae</taxon>
        <taxon>rosids</taxon>
        <taxon>malvids</taxon>
        <taxon>Brassicales</taxon>
        <taxon>Brassicaceae</taxon>
        <taxon>Camelineae</taxon>
        <taxon>Arabidopsis</taxon>
    </lineage>
</organism>
<reference key="1">
    <citation type="journal article" date="1998" name="DNA Res.">
        <title>Structural analysis of Arabidopsis thaliana chromosome 5. VI. Sequence features of the regions of 1,367,185 bp covered by 19 physically assigned P1 and TAC clones.</title>
        <authorList>
            <person name="Kotani H."/>
            <person name="Nakamura Y."/>
            <person name="Sato S."/>
            <person name="Asamizu E."/>
            <person name="Kaneko T."/>
            <person name="Miyajima N."/>
            <person name="Tabata S."/>
        </authorList>
    </citation>
    <scope>NUCLEOTIDE SEQUENCE [LARGE SCALE GENOMIC DNA]</scope>
    <source>
        <strain>cv. Columbia</strain>
    </source>
</reference>
<reference key="2">
    <citation type="journal article" date="2017" name="Plant J.">
        <title>Araport11: a complete reannotation of the Arabidopsis thaliana reference genome.</title>
        <authorList>
            <person name="Cheng C.Y."/>
            <person name="Krishnakumar V."/>
            <person name="Chan A.P."/>
            <person name="Thibaud-Nissen F."/>
            <person name="Schobel S."/>
            <person name="Town C.D."/>
        </authorList>
    </citation>
    <scope>GENOME REANNOTATION</scope>
    <source>
        <strain>cv. Columbia</strain>
    </source>
</reference>
<reference key="3">
    <citation type="journal article" date="2002" name="Science">
        <title>Functional annotation of a full-length Arabidopsis cDNA collection.</title>
        <authorList>
            <person name="Seki M."/>
            <person name="Narusaka M."/>
            <person name="Kamiya A."/>
            <person name="Ishida J."/>
            <person name="Satou M."/>
            <person name="Sakurai T."/>
            <person name="Nakajima M."/>
            <person name="Enju A."/>
            <person name="Akiyama K."/>
            <person name="Oono Y."/>
            <person name="Muramatsu M."/>
            <person name="Hayashizaki Y."/>
            <person name="Kawai J."/>
            <person name="Carninci P."/>
            <person name="Itoh M."/>
            <person name="Ishii Y."/>
            <person name="Arakawa T."/>
            <person name="Shibata K."/>
            <person name="Shinagawa A."/>
            <person name="Shinozaki K."/>
        </authorList>
    </citation>
    <scope>NUCLEOTIDE SEQUENCE [LARGE SCALE MRNA] (ISOFORM 1)</scope>
    <source>
        <strain>cv. Columbia</strain>
    </source>
</reference>
<reference key="4">
    <citation type="journal article" date="2003" name="Science">
        <title>Empirical analysis of transcriptional activity in the Arabidopsis genome.</title>
        <authorList>
            <person name="Yamada K."/>
            <person name="Lim J."/>
            <person name="Dale J.M."/>
            <person name="Chen H."/>
            <person name="Shinn P."/>
            <person name="Palm C.J."/>
            <person name="Southwick A.M."/>
            <person name="Wu H.C."/>
            <person name="Kim C.J."/>
            <person name="Nguyen M."/>
            <person name="Pham P.K."/>
            <person name="Cheuk R.F."/>
            <person name="Karlin-Newmann G."/>
            <person name="Liu S.X."/>
            <person name="Lam B."/>
            <person name="Sakano H."/>
            <person name="Wu T."/>
            <person name="Yu G."/>
            <person name="Miranda M."/>
            <person name="Quach H.L."/>
            <person name="Tripp M."/>
            <person name="Chang C.H."/>
            <person name="Lee J.M."/>
            <person name="Toriumi M.J."/>
            <person name="Chan M.M."/>
            <person name="Tang C.C."/>
            <person name="Onodera C.S."/>
            <person name="Deng J.M."/>
            <person name="Akiyama K."/>
            <person name="Ansari Y."/>
            <person name="Arakawa T."/>
            <person name="Banh J."/>
            <person name="Banno F."/>
            <person name="Bowser L."/>
            <person name="Brooks S.Y."/>
            <person name="Carninci P."/>
            <person name="Chao Q."/>
            <person name="Choy N."/>
            <person name="Enju A."/>
            <person name="Goldsmith A.D."/>
            <person name="Gurjal M."/>
            <person name="Hansen N.F."/>
            <person name="Hayashizaki Y."/>
            <person name="Johnson-Hopson C."/>
            <person name="Hsuan V.W."/>
            <person name="Iida K."/>
            <person name="Karnes M."/>
            <person name="Khan S."/>
            <person name="Koesema E."/>
            <person name="Ishida J."/>
            <person name="Jiang P.X."/>
            <person name="Jones T."/>
            <person name="Kawai J."/>
            <person name="Kamiya A."/>
            <person name="Meyers C."/>
            <person name="Nakajima M."/>
            <person name="Narusaka M."/>
            <person name="Seki M."/>
            <person name="Sakurai T."/>
            <person name="Satou M."/>
            <person name="Tamse R."/>
            <person name="Vaysberg M."/>
            <person name="Wallender E.K."/>
            <person name="Wong C."/>
            <person name="Yamamura Y."/>
            <person name="Yuan S."/>
            <person name="Shinozaki K."/>
            <person name="Davis R.W."/>
            <person name="Theologis A."/>
            <person name="Ecker J.R."/>
        </authorList>
    </citation>
    <scope>NUCLEOTIDE SEQUENCE [LARGE SCALE MRNA] (ISOFORM 1)</scope>
    <source>
        <strain>cv. Columbia</strain>
    </source>
</reference>
<reference key="5">
    <citation type="journal article" date="1998" name="Plant Physiol.">
        <title>Superoxide dismutase in Arabidopsis: an eclectic enzyme family with disparate regulation and protein localization.</title>
        <authorList>
            <person name="Kliebenstein D.J."/>
            <person name="Monde R.A."/>
            <person name="Last R.L."/>
        </authorList>
    </citation>
    <scope>NUCLEOTIDE SEQUENCE [MRNA] OF 3-164 (ISOFORM 1)</scope>
    <scope>TISSUE SPECIFICITY</scope>
    <scope>SUBCELLULAR LOCATION</scope>
    <scope>INDUCTION BY LIGHT; UV-B AND OZONE</scope>
    <scope>GENE FAMILY</scope>
    <source>
        <strain>cv. Columbia</strain>
    </source>
</reference>
<reference key="6">
    <citation type="journal article" date="2007" name="Plant Cell">
        <title>Proteome analysis of Arabidopsis leaf peroxisomes reveals novel targeting peptides, metabolic pathways, and defense mechanisms.</title>
        <authorList>
            <person name="Reumann S."/>
            <person name="Babujee L."/>
            <person name="Ma C."/>
            <person name="Wienkoop S."/>
            <person name="Siemsen T."/>
            <person name="Antonicelli G.E."/>
            <person name="Rasche N."/>
            <person name="Lueder F."/>
            <person name="Weckwerth W."/>
            <person name="Jahn O."/>
        </authorList>
    </citation>
    <scope>IDENTIFICATION BY MASS SPECTROMETRY</scope>
</reference>
<reference key="7">
    <citation type="journal article" date="2008" name="Physiol. Plantarum">
        <title>Long-term effects of mild salt stress on growth, ion accumulation and superoxide dismutase expression of Arabidopsis rosette leaves.</title>
        <authorList>
            <person name="Attia H."/>
            <person name="Arnaud N."/>
            <person name="Karray N."/>
            <person name="Lachaal M."/>
        </authorList>
    </citation>
    <scope>INDUCTION BY SALT</scope>
    <source>
        <strain>cv. Columbia</strain>
    </source>
</reference>
<accession>Q9FK60</accession>
<accession>B3H6P9</accession>
<accession>O81236</accession>
<feature type="chain" id="PRO_0000419143" description="Superoxide dismutase [Cu-Zn] 3">
    <location>
        <begin position="1"/>
        <end position="164"/>
    </location>
</feature>
<feature type="short sequence motif" description="Peroxisome localization signal" evidence="1">
    <location>
        <begin position="162"/>
        <end position="164"/>
    </location>
</feature>
<feature type="binding site" evidence="1">
    <location>
        <position position="51"/>
    </location>
    <ligand>
        <name>Cu cation</name>
        <dbReference type="ChEBI" id="CHEBI:23378"/>
        <note>catalytic</note>
    </ligand>
</feature>
<feature type="binding site" evidence="1">
    <location>
        <position position="53"/>
    </location>
    <ligand>
        <name>Cu cation</name>
        <dbReference type="ChEBI" id="CHEBI:23378"/>
        <note>catalytic</note>
    </ligand>
</feature>
<feature type="binding site" evidence="1">
    <location>
        <position position="68"/>
    </location>
    <ligand>
        <name>Cu cation</name>
        <dbReference type="ChEBI" id="CHEBI:23378"/>
        <note>catalytic</note>
    </ligand>
</feature>
<feature type="binding site" evidence="1">
    <location>
        <position position="68"/>
    </location>
    <ligand>
        <name>Zn(2+)</name>
        <dbReference type="ChEBI" id="CHEBI:29105"/>
        <note>structural</note>
    </ligand>
</feature>
<feature type="binding site" evidence="1">
    <location>
        <position position="76"/>
    </location>
    <ligand>
        <name>Zn(2+)</name>
        <dbReference type="ChEBI" id="CHEBI:29105"/>
        <note>structural</note>
    </ligand>
</feature>
<feature type="binding site" evidence="1">
    <location>
        <position position="85"/>
    </location>
    <ligand>
        <name>Zn(2+)</name>
        <dbReference type="ChEBI" id="CHEBI:29105"/>
        <note>structural</note>
    </ligand>
</feature>
<feature type="binding site" evidence="1">
    <location>
        <position position="88"/>
    </location>
    <ligand>
        <name>Zn(2+)</name>
        <dbReference type="ChEBI" id="CHEBI:29105"/>
        <note>structural</note>
    </ligand>
</feature>
<feature type="binding site" evidence="1">
    <location>
        <position position="125"/>
    </location>
    <ligand>
        <name>Cu cation</name>
        <dbReference type="ChEBI" id="CHEBI:23378"/>
        <note>catalytic</note>
    </ligand>
</feature>
<feature type="disulfide bond" evidence="1">
    <location>
        <begin position="62"/>
        <end position="151"/>
    </location>
</feature>
<feature type="splice variant" id="VSP_044111" description="In isoform 2." evidence="4">
    <original>GHK</original>
    <variation>TKH</variation>
    <location>
        <begin position="135"/>
        <end position="137"/>
    </location>
</feature>
<feature type="splice variant" id="VSP_044112" description="In isoform 2." evidence="4">
    <location>
        <begin position="138"/>
        <end position="164"/>
    </location>
</feature>